<evidence type="ECO:0000255" key="1">
    <source>
        <dbReference type="HAMAP-Rule" id="MF_01180"/>
    </source>
</evidence>
<keyword id="KW-1005">Bacterial flagellum biogenesis</keyword>
<keyword id="KW-0143">Chaperone</keyword>
<keyword id="KW-0963">Cytoplasm</keyword>
<keyword id="KW-0678">Repressor</keyword>
<keyword id="KW-0804">Transcription</keyword>
<keyword id="KW-0805">Transcription regulation</keyword>
<comment type="function">
    <text evidence="1">Dual-function protein that regulates the transcription of class 2 flagellar operons and that also acts as an export chaperone for the filament-capping protein FliD. As a transcriptional regulator, acts as an anti-FlhDC factor; it directly binds FlhC, thus inhibiting the binding of the FlhC/FlhD complex to class 2 promoters, resulting in decreased expression of class 2 flagellar operons. As a chaperone, effects FliD transition to the membrane by preventing its premature polymerization, and by directing it to the export apparatus.</text>
</comment>
<comment type="subunit">
    <text evidence="1">Homodimer. Interacts with FliD and FlhC.</text>
</comment>
<comment type="subcellular location">
    <subcellularLocation>
        <location evidence="1">Cytoplasm</location>
        <location evidence="1">Cytosol</location>
    </subcellularLocation>
</comment>
<comment type="similarity">
    <text evidence="1">Belongs to the FliT family.</text>
</comment>
<gene>
    <name evidence="1" type="primary">fliT</name>
    <name type="ordered locus">SPC_1752</name>
</gene>
<sequence>MTSTVEFINRWQRIALLSQSLLELAQRGEWDLLLQQEVSYLQSIETVMEKQTPPGITRSIQDMVAGYIKQTLDNEQLLKGLLQQRLDELSSLIGQSTRQKSLNNAYGRLSGMLLVPDAPGAS</sequence>
<accession>C0Q292</accession>
<reference key="1">
    <citation type="journal article" date="2009" name="PLoS ONE">
        <title>Salmonella paratyphi C: genetic divergence from Salmonella choleraesuis and pathogenic convergence with Salmonella typhi.</title>
        <authorList>
            <person name="Liu W.-Q."/>
            <person name="Feng Y."/>
            <person name="Wang Y."/>
            <person name="Zou Q.-H."/>
            <person name="Chen F."/>
            <person name="Guo J.-T."/>
            <person name="Peng Y.-H."/>
            <person name="Jin Y."/>
            <person name="Li Y.-G."/>
            <person name="Hu S.-N."/>
            <person name="Johnston R.N."/>
            <person name="Liu G.-R."/>
            <person name="Liu S.-L."/>
        </authorList>
    </citation>
    <scope>NUCLEOTIDE SEQUENCE [LARGE SCALE GENOMIC DNA]</scope>
    <source>
        <strain>RKS4594</strain>
    </source>
</reference>
<dbReference type="EMBL" id="CP000857">
    <property type="protein sequence ID" value="ACN45895.1"/>
    <property type="molecule type" value="Genomic_DNA"/>
</dbReference>
<dbReference type="RefSeq" id="WP_000204899.1">
    <property type="nucleotide sequence ID" value="NC_012125.1"/>
</dbReference>
<dbReference type="SMR" id="C0Q292"/>
<dbReference type="KEGG" id="sei:SPC_1752"/>
<dbReference type="HOGENOM" id="CLU_155793_1_0_6"/>
<dbReference type="Proteomes" id="UP000001599">
    <property type="component" value="Chromosome"/>
</dbReference>
<dbReference type="GO" id="GO:0005829">
    <property type="term" value="C:cytosol"/>
    <property type="evidence" value="ECO:0007669"/>
    <property type="project" value="UniProtKB-SubCell"/>
</dbReference>
<dbReference type="GO" id="GO:0044781">
    <property type="term" value="P:bacterial-type flagellum organization"/>
    <property type="evidence" value="ECO:0007669"/>
    <property type="project" value="UniProtKB-KW"/>
</dbReference>
<dbReference type="GO" id="GO:1902209">
    <property type="term" value="P:negative regulation of bacterial-type flagellum assembly"/>
    <property type="evidence" value="ECO:0007669"/>
    <property type="project" value="UniProtKB-UniRule"/>
</dbReference>
<dbReference type="GO" id="GO:0006457">
    <property type="term" value="P:protein folding"/>
    <property type="evidence" value="ECO:0007669"/>
    <property type="project" value="UniProtKB-UniRule"/>
</dbReference>
<dbReference type="FunFam" id="1.20.58.380:FF:000002">
    <property type="entry name" value="Flagellar protein FliT"/>
    <property type="match status" value="1"/>
</dbReference>
<dbReference type="Gene3D" id="1.20.58.380">
    <property type="entry name" value="Flagellar protein flit"/>
    <property type="match status" value="1"/>
</dbReference>
<dbReference type="HAMAP" id="MF_01180">
    <property type="entry name" value="FliT"/>
    <property type="match status" value="1"/>
</dbReference>
<dbReference type="InterPro" id="IPR008622">
    <property type="entry name" value="FliT"/>
</dbReference>
<dbReference type="NCBIfam" id="NF007836">
    <property type="entry name" value="PRK10548.1"/>
    <property type="match status" value="1"/>
</dbReference>
<dbReference type="Pfam" id="PF05400">
    <property type="entry name" value="FliT"/>
    <property type="match status" value="1"/>
</dbReference>
<organism>
    <name type="scientific">Salmonella paratyphi C (strain RKS4594)</name>
    <dbReference type="NCBI Taxonomy" id="476213"/>
    <lineage>
        <taxon>Bacteria</taxon>
        <taxon>Pseudomonadati</taxon>
        <taxon>Pseudomonadota</taxon>
        <taxon>Gammaproteobacteria</taxon>
        <taxon>Enterobacterales</taxon>
        <taxon>Enterobacteriaceae</taxon>
        <taxon>Salmonella</taxon>
    </lineage>
</organism>
<protein>
    <recommendedName>
        <fullName evidence="1">Flagellar protein FliT</fullName>
    </recommendedName>
</protein>
<proteinExistence type="inferred from homology"/>
<feature type="chain" id="PRO_1000164434" description="Flagellar protein FliT">
    <location>
        <begin position="1"/>
        <end position="122"/>
    </location>
</feature>
<feature type="region of interest" description="Required for homodimerization" evidence="1">
    <location>
        <begin position="1"/>
        <end position="50"/>
    </location>
</feature>
<feature type="region of interest" description="FliD binding" evidence="1">
    <location>
        <begin position="60"/>
        <end position="98"/>
    </location>
</feature>
<name>FLIT_SALPC</name>